<accession>B2SS96</accession>
<evidence type="ECO:0000255" key="1">
    <source>
        <dbReference type="HAMAP-Rule" id="MF_00165"/>
    </source>
</evidence>
<dbReference type="EC" id="2.7.4.9" evidence="1"/>
<dbReference type="EMBL" id="CP000967">
    <property type="protein sequence ID" value="ACD61371.1"/>
    <property type="molecule type" value="Genomic_DNA"/>
</dbReference>
<dbReference type="RefSeq" id="WP_011257363.1">
    <property type="nucleotide sequence ID" value="NC_010717.2"/>
</dbReference>
<dbReference type="SMR" id="B2SS96"/>
<dbReference type="KEGG" id="xop:PXO_02846"/>
<dbReference type="eggNOG" id="COG0125">
    <property type="taxonomic scope" value="Bacteria"/>
</dbReference>
<dbReference type="HOGENOM" id="CLU_049131_0_2_6"/>
<dbReference type="Proteomes" id="UP000001740">
    <property type="component" value="Chromosome"/>
</dbReference>
<dbReference type="GO" id="GO:0005829">
    <property type="term" value="C:cytosol"/>
    <property type="evidence" value="ECO:0007669"/>
    <property type="project" value="TreeGrafter"/>
</dbReference>
<dbReference type="GO" id="GO:0005524">
    <property type="term" value="F:ATP binding"/>
    <property type="evidence" value="ECO:0007669"/>
    <property type="project" value="UniProtKB-UniRule"/>
</dbReference>
<dbReference type="GO" id="GO:0004798">
    <property type="term" value="F:dTMP kinase activity"/>
    <property type="evidence" value="ECO:0007669"/>
    <property type="project" value="UniProtKB-UniRule"/>
</dbReference>
<dbReference type="GO" id="GO:0006233">
    <property type="term" value="P:dTDP biosynthetic process"/>
    <property type="evidence" value="ECO:0007669"/>
    <property type="project" value="InterPro"/>
</dbReference>
<dbReference type="GO" id="GO:0006235">
    <property type="term" value="P:dTTP biosynthetic process"/>
    <property type="evidence" value="ECO:0007669"/>
    <property type="project" value="UniProtKB-UniRule"/>
</dbReference>
<dbReference type="GO" id="GO:0006227">
    <property type="term" value="P:dUDP biosynthetic process"/>
    <property type="evidence" value="ECO:0007669"/>
    <property type="project" value="TreeGrafter"/>
</dbReference>
<dbReference type="CDD" id="cd01672">
    <property type="entry name" value="TMPK"/>
    <property type="match status" value="1"/>
</dbReference>
<dbReference type="Gene3D" id="3.40.50.300">
    <property type="entry name" value="P-loop containing nucleotide triphosphate hydrolases"/>
    <property type="match status" value="1"/>
</dbReference>
<dbReference type="HAMAP" id="MF_00165">
    <property type="entry name" value="Thymidylate_kinase"/>
    <property type="match status" value="1"/>
</dbReference>
<dbReference type="InterPro" id="IPR027417">
    <property type="entry name" value="P-loop_NTPase"/>
</dbReference>
<dbReference type="InterPro" id="IPR039430">
    <property type="entry name" value="Thymidylate_kin-like_dom"/>
</dbReference>
<dbReference type="InterPro" id="IPR018094">
    <property type="entry name" value="Thymidylate_kinase"/>
</dbReference>
<dbReference type="NCBIfam" id="TIGR00041">
    <property type="entry name" value="DTMP_kinase"/>
    <property type="match status" value="1"/>
</dbReference>
<dbReference type="PANTHER" id="PTHR10344">
    <property type="entry name" value="THYMIDYLATE KINASE"/>
    <property type="match status" value="1"/>
</dbReference>
<dbReference type="PANTHER" id="PTHR10344:SF4">
    <property type="entry name" value="UMP-CMP KINASE 2, MITOCHONDRIAL"/>
    <property type="match status" value="1"/>
</dbReference>
<dbReference type="Pfam" id="PF02223">
    <property type="entry name" value="Thymidylate_kin"/>
    <property type="match status" value="1"/>
</dbReference>
<dbReference type="SUPFAM" id="SSF52540">
    <property type="entry name" value="P-loop containing nucleoside triphosphate hydrolases"/>
    <property type="match status" value="1"/>
</dbReference>
<comment type="function">
    <text evidence="1">Phosphorylation of dTMP to form dTDP in both de novo and salvage pathways of dTTP synthesis.</text>
</comment>
<comment type="catalytic activity">
    <reaction evidence="1">
        <text>dTMP + ATP = dTDP + ADP</text>
        <dbReference type="Rhea" id="RHEA:13517"/>
        <dbReference type="ChEBI" id="CHEBI:30616"/>
        <dbReference type="ChEBI" id="CHEBI:58369"/>
        <dbReference type="ChEBI" id="CHEBI:63528"/>
        <dbReference type="ChEBI" id="CHEBI:456216"/>
        <dbReference type="EC" id="2.7.4.9"/>
    </reaction>
</comment>
<comment type="similarity">
    <text evidence="1">Belongs to the thymidylate kinase family.</text>
</comment>
<organism>
    <name type="scientific">Xanthomonas oryzae pv. oryzae (strain PXO99A)</name>
    <dbReference type="NCBI Taxonomy" id="360094"/>
    <lineage>
        <taxon>Bacteria</taxon>
        <taxon>Pseudomonadati</taxon>
        <taxon>Pseudomonadota</taxon>
        <taxon>Gammaproteobacteria</taxon>
        <taxon>Lysobacterales</taxon>
        <taxon>Lysobacteraceae</taxon>
        <taxon>Xanthomonas</taxon>
    </lineage>
</organism>
<sequence>MTIELKPGGLLIAIEGIDGAGKTTLARRLTTTLEAAGARVVLSKEPTNGPWGTKLRQSAATGRLSADEEAELLIRDRHEHVDTLIAPALARGDIVILDRYFPSMVAYQGAAGLPLDELLELNAFAPRPDVLLLLDLPPPTGLARIRARGDAPNHFETQDNLERCRTIFAGLELPGKHVVDASADADSVLRQAHAIIVAALADRLSGDGAPADTGKAALELLSAGRPA</sequence>
<feature type="chain" id="PRO_1000097446" description="Thymidylate kinase">
    <location>
        <begin position="1"/>
        <end position="227"/>
    </location>
</feature>
<feature type="binding site" evidence="1">
    <location>
        <begin position="16"/>
        <end position="23"/>
    </location>
    <ligand>
        <name>ATP</name>
        <dbReference type="ChEBI" id="CHEBI:30616"/>
    </ligand>
</feature>
<gene>
    <name evidence="1" type="primary">tmk</name>
    <name type="ordered locus">PXO_02846</name>
</gene>
<keyword id="KW-0067">ATP-binding</keyword>
<keyword id="KW-0418">Kinase</keyword>
<keyword id="KW-0545">Nucleotide biosynthesis</keyword>
<keyword id="KW-0547">Nucleotide-binding</keyword>
<keyword id="KW-0808">Transferase</keyword>
<proteinExistence type="inferred from homology"/>
<reference key="1">
    <citation type="journal article" date="2008" name="BMC Genomics">
        <title>Genome sequence and rapid evolution of the rice pathogen Xanthomonas oryzae pv. oryzae PXO99A.</title>
        <authorList>
            <person name="Salzberg S.L."/>
            <person name="Sommer D.D."/>
            <person name="Schatz M.C."/>
            <person name="Phillippy A.M."/>
            <person name="Rabinowicz P.D."/>
            <person name="Tsuge S."/>
            <person name="Furutani A."/>
            <person name="Ochiai H."/>
            <person name="Delcher A.L."/>
            <person name="Kelley D."/>
            <person name="Madupu R."/>
            <person name="Puiu D."/>
            <person name="Radune D."/>
            <person name="Shumway M."/>
            <person name="Trapnell C."/>
            <person name="Aparna G."/>
            <person name="Jha G."/>
            <person name="Pandey A."/>
            <person name="Patil P.B."/>
            <person name="Ishihara H."/>
            <person name="Meyer D.F."/>
            <person name="Szurek B."/>
            <person name="Verdier V."/>
            <person name="Koebnik R."/>
            <person name="Dow J.M."/>
            <person name="Ryan R.P."/>
            <person name="Hirata H."/>
            <person name="Tsuyumu S."/>
            <person name="Won Lee S."/>
            <person name="Seo Y.-S."/>
            <person name="Sriariyanum M."/>
            <person name="Ronald P.C."/>
            <person name="Sonti R.V."/>
            <person name="Van Sluys M.-A."/>
            <person name="Leach J.E."/>
            <person name="White F.F."/>
            <person name="Bogdanove A.J."/>
        </authorList>
    </citation>
    <scope>NUCLEOTIDE SEQUENCE [LARGE SCALE GENOMIC DNA]</scope>
    <source>
        <strain>PXO99A</strain>
    </source>
</reference>
<protein>
    <recommendedName>
        <fullName evidence="1">Thymidylate kinase</fullName>
        <ecNumber evidence="1">2.7.4.9</ecNumber>
    </recommendedName>
    <alternativeName>
        <fullName evidence="1">dTMP kinase</fullName>
    </alternativeName>
</protein>
<name>KTHY_XANOP</name>